<gene>
    <name evidence="1" type="primary">gcvT</name>
    <name type="ordered locus">Sputw3181_0730</name>
</gene>
<name>GCST_SHESW</name>
<feature type="chain" id="PRO_1000047707" description="Aminomethyltransferase">
    <location>
        <begin position="1"/>
        <end position="364"/>
    </location>
</feature>
<dbReference type="EC" id="2.1.2.10" evidence="1"/>
<dbReference type="EMBL" id="CP000503">
    <property type="protein sequence ID" value="ABM23581.1"/>
    <property type="molecule type" value="Genomic_DNA"/>
</dbReference>
<dbReference type="RefSeq" id="WP_011788111.1">
    <property type="nucleotide sequence ID" value="NC_008750.1"/>
</dbReference>
<dbReference type="SMR" id="A1RFY6"/>
<dbReference type="KEGG" id="shw:Sputw3181_0730"/>
<dbReference type="HOGENOM" id="CLU_007884_10_2_6"/>
<dbReference type="Proteomes" id="UP000002597">
    <property type="component" value="Chromosome"/>
</dbReference>
<dbReference type="GO" id="GO:0005829">
    <property type="term" value="C:cytosol"/>
    <property type="evidence" value="ECO:0007669"/>
    <property type="project" value="TreeGrafter"/>
</dbReference>
<dbReference type="GO" id="GO:0005960">
    <property type="term" value="C:glycine cleavage complex"/>
    <property type="evidence" value="ECO:0007669"/>
    <property type="project" value="InterPro"/>
</dbReference>
<dbReference type="GO" id="GO:0004047">
    <property type="term" value="F:aminomethyltransferase activity"/>
    <property type="evidence" value="ECO:0007669"/>
    <property type="project" value="UniProtKB-UniRule"/>
</dbReference>
<dbReference type="GO" id="GO:0008483">
    <property type="term" value="F:transaminase activity"/>
    <property type="evidence" value="ECO:0007669"/>
    <property type="project" value="UniProtKB-KW"/>
</dbReference>
<dbReference type="GO" id="GO:0019464">
    <property type="term" value="P:glycine decarboxylation via glycine cleavage system"/>
    <property type="evidence" value="ECO:0007669"/>
    <property type="project" value="UniProtKB-UniRule"/>
</dbReference>
<dbReference type="FunFam" id="2.40.30.110:FF:000001">
    <property type="entry name" value="Aminomethyltransferase"/>
    <property type="match status" value="1"/>
</dbReference>
<dbReference type="FunFam" id="3.30.70.1400:FF:000001">
    <property type="entry name" value="Aminomethyltransferase"/>
    <property type="match status" value="1"/>
</dbReference>
<dbReference type="FunFam" id="4.10.1250.10:FF:000001">
    <property type="entry name" value="Aminomethyltransferase"/>
    <property type="match status" value="1"/>
</dbReference>
<dbReference type="Gene3D" id="2.40.30.110">
    <property type="entry name" value="Aminomethyltransferase beta-barrel domains"/>
    <property type="match status" value="1"/>
</dbReference>
<dbReference type="Gene3D" id="3.30.70.1400">
    <property type="entry name" value="Aminomethyltransferase beta-barrel domains"/>
    <property type="match status" value="1"/>
</dbReference>
<dbReference type="Gene3D" id="4.10.1250.10">
    <property type="entry name" value="Aminomethyltransferase fragment"/>
    <property type="match status" value="1"/>
</dbReference>
<dbReference type="Gene3D" id="3.30.1360.120">
    <property type="entry name" value="Probable tRNA modification gtpase trme, domain 1"/>
    <property type="match status" value="1"/>
</dbReference>
<dbReference type="HAMAP" id="MF_00259">
    <property type="entry name" value="GcvT"/>
    <property type="match status" value="1"/>
</dbReference>
<dbReference type="InterPro" id="IPR006223">
    <property type="entry name" value="GCS_T"/>
</dbReference>
<dbReference type="InterPro" id="IPR022903">
    <property type="entry name" value="GCS_T_bac"/>
</dbReference>
<dbReference type="InterPro" id="IPR013977">
    <property type="entry name" value="GCST_C"/>
</dbReference>
<dbReference type="InterPro" id="IPR006222">
    <property type="entry name" value="GCV_T_N"/>
</dbReference>
<dbReference type="InterPro" id="IPR028896">
    <property type="entry name" value="GcvT/YgfZ/DmdA"/>
</dbReference>
<dbReference type="InterPro" id="IPR029043">
    <property type="entry name" value="GcvT/YgfZ_C"/>
</dbReference>
<dbReference type="InterPro" id="IPR027266">
    <property type="entry name" value="TrmE/GcvT_dom1"/>
</dbReference>
<dbReference type="NCBIfam" id="TIGR00528">
    <property type="entry name" value="gcvT"/>
    <property type="match status" value="1"/>
</dbReference>
<dbReference type="NCBIfam" id="NF001567">
    <property type="entry name" value="PRK00389.1"/>
    <property type="match status" value="1"/>
</dbReference>
<dbReference type="PANTHER" id="PTHR43757">
    <property type="entry name" value="AMINOMETHYLTRANSFERASE"/>
    <property type="match status" value="1"/>
</dbReference>
<dbReference type="PANTHER" id="PTHR43757:SF2">
    <property type="entry name" value="AMINOMETHYLTRANSFERASE, MITOCHONDRIAL"/>
    <property type="match status" value="1"/>
</dbReference>
<dbReference type="Pfam" id="PF01571">
    <property type="entry name" value="GCV_T"/>
    <property type="match status" value="1"/>
</dbReference>
<dbReference type="Pfam" id="PF08669">
    <property type="entry name" value="GCV_T_C"/>
    <property type="match status" value="1"/>
</dbReference>
<dbReference type="PIRSF" id="PIRSF006487">
    <property type="entry name" value="GcvT"/>
    <property type="match status" value="1"/>
</dbReference>
<dbReference type="SUPFAM" id="SSF101790">
    <property type="entry name" value="Aminomethyltransferase beta-barrel domain"/>
    <property type="match status" value="1"/>
</dbReference>
<dbReference type="SUPFAM" id="SSF103025">
    <property type="entry name" value="Folate-binding domain"/>
    <property type="match status" value="1"/>
</dbReference>
<keyword id="KW-0032">Aminotransferase</keyword>
<keyword id="KW-0808">Transferase</keyword>
<evidence type="ECO:0000255" key="1">
    <source>
        <dbReference type="HAMAP-Rule" id="MF_00259"/>
    </source>
</evidence>
<proteinExistence type="inferred from homology"/>
<reference key="1">
    <citation type="submission" date="2006-12" db="EMBL/GenBank/DDBJ databases">
        <title>Complete sequence of Shewanella sp. W3-18-1.</title>
        <authorList>
            <consortium name="US DOE Joint Genome Institute"/>
            <person name="Copeland A."/>
            <person name="Lucas S."/>
            <person name="Lapidus A."/>
            <person name="Barry K."/>
            <person name="Detter J.C."/>
            <person name="Glavina del Rio T."/>
            <person name="Hammon N."/>
            <person name="Israni S."/>
            <person name="Dalin E."/>
            <person name="Tice H."/>
            <person name="Pitluck S."/>
            <person name="Chain P."/>
            <person name="Malfatti S."/>
            <person name="Shin M."/>
            <person name="Vergez L."/>
            <person name="Schmutz J."/>
            <person name="Larimer F."/>
            <person name="Land M."/>
            <person name="Hauser L."/>
            <person name="Kyrpides N."/>
            <person name="Lykidis A."/>
            <person name="Tiedje J."/>
            <person name="Richardson P."/>
        </authorList>
    </citation>
    <scope>NUCLEOTIDE SEQUENCE [LARGE SCALE GENOMIC DNA]</scope>
    <source>
        <strain>W3-18-1</strain>
    </source>
</reference>
<sequence length="364" mass="39796">MANKTILFNKHLESNAKMVDFHGWDMPLNYGSQIEEHHAVRQDAGMFDVSHMTVVDVIGTDACAFLRKLLANDVARLKVPGKALYSGMLDENAGIIDDLITYYLTDTFYRVVVNSATREKDLAWIAKQSQGFDITVTERPELAMIAVQGPNAKAKAAAVFSADQNAAIEGMKPFFGKQAGSLFIATTGYTGEAGYEIIVPEDEAQALWQALLDQGVKPCGLGARDTLRLEAGMNLYGLDMDETINPLAANMGWTIAWEPTDRDFIGRKALEALRDAGTDKLVGLVMEEKGVLRHDMPVFFTDAAGVEHQGVITSGTFSPTLGYSIAMARVPNQIGDTAEVEMRKKRVAVRVVAPNFVRNGKQAF</sequence>
<comment type="function">
    <text evidence="1">The glycine cleavage system catalyzes the degradation of glycine.</text>
</comment>
<comment type="catalytic activity">
    <reaction evidence="1">
        <text>N(6)-[(R)-S(8)-aminomethyldihydrolipoyl]-L-lysyl-[protein] + (6S)-5,6,7,8-tetrahydrofolate = N(6)-[(R)-dihydrolipoyl]-L-lysyl-[protein] + (6R)-5,10-methylene-5,6,7,8-tetrahydrofolate + NH4(+)</text>
        <dbReference type="Rhea" id="RHEA:16945"/>
        <dbReference type="Rhea" id="RHEA-COMP:10475"/>
        <dbReference type="Rhea" id="RHEA-COMP:10492"/>
        <dbReference type="ChEBI" id="CHEBI:15636"/>
        <dbReference type="ChEBI" id="CHEBI:28938"/>
        <dbReference type="ChEBI" id="CHEBI:57453"/>
        <dbReference type="ChEBI" id="CHEBI:83100"/>
        <dbReference type="ChEBI" id="CHEBI:83143"/>
        <dbReference type="EC" id="2.1.2.10"/>
    </reaction>
</comment>
<comment type="subunit">
    <text evidence="1">The glycine cleavage system is composed of four proteins: P, T, L and H.</text>
</comment>
<comment type="similarity">
    <text evidence="1">Belongs to the GcvT family.</text>
</comment>
<organism>
    <name type="scientific">Shewanella sp. (strain W3-18-1)</name>
    <dbReference type="NCBI Taxonomy" id="351745"/>
    <lineage>
        <taxon>Bacteria</taxon>
        <taxon>Pseudomonadati</taxon>
        <taxon>Pseudomonadota</taxon>
        <taxon>Gammaproteobacteria</taxon>
        <taxon>Alteromonadales</taxon>
        <taxon>Shewanellaceae</taxon>
        <taxon>Shewanella</taxon>
    </lineage>
</organism>
<protein>
    <recommendedName>
        <fullName evidence="1">Aminomethyltransferase</fullName>
        <ecNumber evidence="1">2.1.2.10</ecNumber>
    </recommendedName>
    <alternativeName>
        <fullName evidence="1">Glycine cleavage system T protein</fullName>
    </alternativeName>
</protein>
<accession>A1RFY6</accession>